<evidence type="ECO:0000250" key="1"/>
<evidence type="ECO:0000255" key="2"/>
<evidence type="ECO:0000305" key="3"/>
<accession>P0AF00</accession>
<accession>P30746</accession>
<keyword id="KW-0342">GTP-binding</keyword>
<keyword id="KW-0501">Molybdenum cofactor biosynthesis</keyword>
<keyword id="KW-0547">Nucleotide-binding</keyword>
<keyword id="KW-1185">Reference proteome</keyword>
<organism>
    <name type="scientific">Escherichia coli O157:H7</name>
    <dbReference type="NCBI Taxonomy" id="83334"/>
    <lineage>
        <taxon>Bacteria</taxon>
        <taxon>Pseudomonadati</taxon>
        <taxon>Pseudomonadota</taxon>
        <taxon>Gammaproteobacteria</taxon>
        <taxon>Enterobacterales</taxon>
        <taxon>Enterobacteriaceae</taxon>
        <taxon>Escherichia</taxon>
    </lineage>
</organism>
<dbReference type="EMBL" id="AE005174">
    <property type="protein sequence ID" value="AAG55153.1"/>
    <property type="molecule type" value="Genomic_DNA"/>
</dbReference>
<dbReference type="EMBL" id="BA000007">
    <property type="protein sequence ID" value="BAB34283.1"/>
    <property type="molecule type" value="Genomic_DNA"/>
</dbReference>
<dbReference type="PIR" id="D90736">
    <property type="entry name" value="D90736"/>
</dbReference>
<dbReference type="PIR" id="E85586">
    <property type="entry name" value="E85586"/>
</dbReference>
<dbReference type="RefSeq" id="NP_308887.1">
    <property type="nucleotide sequence ID" value="NC_002695.1"/>
</dbReference>
<dbReference type="RefSeq" id="WP_000084639.1">
    <property type="nucleotide sequence ID" value="NZ_VOAI01000006.1"/>
</dbReference>
<dbReference type="SMR" id="P0AF00"/>
<dbReference type="STRING" id="155864.Z1001"/>
<dbReference type="GeneID" id="917603"/>
<dbReference type="GeneID" id="93776648"/>
<dbReference type="KEGG" id="ece:Z1001"/>
<dbReference type="KEGG" id="ecs:ECs_0860"/>
<dbReference type="PATRIC" id="fig|386585.9.peg.974"/>
<dbReference type="eggNOG" id="COG0521">
    <property type="taxonomic scope" value="Bacteria"/>
</dbReference>
<dbReference type="HOGENOM" id="CLU_077358_2_2_6"/>
<dbReference type="OMA" id="TGWDGIL"/>
<dbReference type="UniPathway" id="UPA00344"/>
<dbReference type="Proteomes" id="UP000000558">
    <property type="component" value="Chromosome"/>
</dbReference>
<dbReference type="Proteomes" id="UP000002519">
    <property type="component" value="Chromosome"/>
</dbReference>
<dbReference type="GO" id="GO:0005829">
    <property type="term" value="C:cytosol"/>
    <property type="evidence" value="ECO:0007669"/>
    <property type="project" value="TreeGrafter"/>
</dbReference>
<dbReference type="GO" id="GO:0005525">
    <property type="term" value="F:GTP binding"/>
    <property type="evidence" value="ECO:0007669"/>
    <property type="project" value="UniProtKB-KW"/>
</dbReference>
<dbReference type="GO" id="GO:0006777">
    <property type="term" value="P:Mo-molybdopterin cofactor biosynthetic process"/>
    <property type="evidence" value="ECO:0007669"/>
    <property type="project" value="UniProtKB-KW"/>
</dbReference>
<dbReference type="CDD" id="cd00886">
    <property type="entry name" value="MogA_MoaB"/>
    <property type="match status" value="1"/>
</dbReference>
<dbReference type="FunFam" id="3.40.980.10:FF:000003">
    <property type="entry name" value="Molybdenum cofactor biosynthesis protein B"/>
    <property type="match status" value="1"/>
</dbReference>
<dbReference type="Gene3D" id="3.40.980.10">
    <property type="entry name" value="MoaB/Mog-like domain"/>
    <property type="match status" value="1"/>
</dbReference>
<dbReference type="InterPro" id="IPR012245">
    <property type="entry name" value="MoaB"/>
</dbReference>
<dbReference type="InterPro" id="IPR036425">
    <property type="entry name" value="MoaB/Mog-like_dom_sf"/>
</dbReference>
<dbReference type="InterPro" id="IPR001453">
    <property type="entry name" value="MoaB/Mog_dom"/>
</dbReference>
<dbReference type="InterPro" id="IPR013484">
    <property type="entry name" value="MoaB_proteobac"/>
</dbReference>
<dbReference type="InterPro" id="IPR008284">
    <property type="entry name" value="MoCF_biosynth_CS"/>
</dbReference>
<dbReference type="NCBIfam" id="TIGR02667">
    <property type="entry name" value="moaB_proteo"/>
    <property type="match status" value="1"/>
</dbReference>
<dbReference type="NCBIfam" id="TIGR00177">
    <property type="entry name" value="molyb_syn"/>
    <property type="match status" value="1"/>
</dbReference>
<dbReference type="PANTHER" id="PTHR43232">
    <property type="entry name" value="MOLYBDENUM COFACTOR BIOSYNTHESIS PROTEIN B"/>
    <property type="match status" value="1"/>
</dbReference>
<dbReference type="PANTHER" id="PTHR43232:SF2">
    <property type="entry name" value="MOLYBDENUM COFACTOR BIOSYNTHESIS PROTEIN B"/>
    <property type="match status" value="1"/>
</dbReference>
<dbReference type="Pfam" id="PF00994">
    <property type="entry name" value="MoCF_biosynth"/>
    <property type="match status" value="1"/>
</dbReference>
<dbReference type="PIRSF" id="PIRSF006443">
    <property type="entry name" value="MoaB"/>
    <property type="match status" value="1"/>
</dbReference>
<dbReference type="SMART" id="SM00852">
    <property type="entry name" value="MoCF_biosynth"/>
    <property type="match status" value="1"/>
</dbReference>
<dbReference type="SUPFAM" id="SSF53218">
    <property type="entry name" value="Molybdenum cofactor biosynthesis proteins"/>
    <property type="match status" value="1"/>
</dbReference>
<dbReference type="PROSITE" id="PS01078">
    <property type="entry name" value="MOCF_BIOSYNTHESIS_1"/>
    <property type="match status" value="1"/>
</dbReference>
<protein>
    <recommendedName>
        <fullName>Molybdenum cofactor biosynthesis protein B</fullName>
    </recommendedName>
</protein>
<gene>
    <name type="primary">moaB</name>
    <name type="ordered locus">Z1001</name>
    <name type="ordered locus">ECs0860</name>
</gene>
<comment type="function">
    <text evidence="1">May be involved in the biosynthesis of molybdopterin. Can bind GTP and has low GTPase activity. Can bind MPT, but has no MPT adenylyl transferase activity.</text>
</comment>
<comment type="pathway">
    <text>Cofactor biosynthesis; molybdopterin biosynthesis.</text>
</comment>
<comment type="similarity">
    <text evidence="3">Belongs to the MoaB/Mog family.</text>
</comment>
<reference key="1">
    <citation type="journal article" date="2001" name="Nature">
        <title>Genome sequence of enterohaemorrhagic Escherichia coli O157:H7.</title>
        <authorList>
            <person name="Perna N.T."/>
            <person name="Plunkett G. III"/>
            <person name="Burland V."/>
            <person name="Mau B."/>
            <person name="Glasner J.D."/>
            <person name="Rose D.J."/>
            <person name="Mayhew G.F."/>
            <person name="Evans P.S."/>
            <person name="Gregor J."/>
            <person name="Kirkpatrick H.A."/>
            <person name="Posfai G."/>
            <person name="Hackett J."/>
            <person name="Klink S."/>
            <person name="Boutin A."/>
            <person name="Shao Y."/>
            <person name="Miller L."/>
            <person name="Grotbeck E.J."/>
            <person name="Davis N.W."/>
            <person name="Lim A."/>
            <person name="Dimalanta E.T."/>
            <person name="Potamousis K."/>
            <person name="Apodaca J."/>
            <person name="Anantharaman T.S."/>
            <person name="Lin J."/>
            <person name="Yen G."/>
            <person name="Schwartz D.C."/>
            <person name="Welch R.A."/>
            <person name="Blattner F.R."/>
        </authorList>
    </citation>
    <scope>NUCLEOTIDE SEQUENCE [LARGE SCALE GENOMIC DNA]</scope>
    <source>
        <strain>O157:H7 / EDL933 / ATCC 700927 / EHEC</strain>
    </source>
</reference>
<reference key="2">
    <citation type="journal article" date="2001" name="DNA Res.">
        <title>Complete genome sequence of enterohemorrhagic Escherichia coli O157:H7 and genomic comparison with a laboratory strain K-12.</title>
        <authorList>
            <person name="Hayashi T."/>
            <person name="Makino K."/>
            <person name="Ohnishi M."/>
            <person name="Kurokawa K."/>
            <person name="Ishii K."/>
            <person name="Yokoyama K."/>
            <person name="Han C.-G."/>
            <person name="Ohtsubo E."/>
            <person name="Nakayama K."/>
            <person name="Murata T."/>
            <person name="Tanaka M."/>
            <person name="Tobe T."/>
            <person name="Iida T."/>
            <person name="Takami H."/>
            <person name="Honda T."/>
            <person name="Sasakawa C."/>
            <person name="Ogasawara N."/>
            <person name="Yasunaga T."/>
            <person name="Kuhara S."/>
            <person name="Shiba T."/>
            <person name="Hattori M."/>
            <person name="Shinagawa H."/>
        </authorList>
    </citation>
    <scope>NUCLEOTIDE SEQUENCE [LARGE SCALE GENOMIC DNA]</scope>
    <source>
        <strain>O157:H7 / Sakai / RIMD 0509952 / EHEC</strain>
    </source>
</reference>
<name>MOAB_ECO57</name>
<sequence length="170" mass="18665">MSQVSTEFIPTRIAILTVSNRRGEEDDTSGHYLRDSAQEAGHHVVDKAIVKENRYAIRAQVSAWIASDDVQVVLITGGTGLTEGDQAPEALLPLFDREVEGFGEVFRMLSFEEIGTSTLQSRAVAGVANKTLIFAMPGSTKACRTAWENIIAPQLDARTRPCNFHPHLKK</sequence>
<feature type="initiator methionine" description="Removed" evidence="1">
    <location>
        <position position="1"/>
    </location>
</feature>
<feature type="chain" id="PRO_0000170971" description="Molybdenum cofactor biosynthesis protein B">
    <location>
        <begin position="2"/>
        <end position="170"/>
    </location>
</feature>
<feature type="binding site" evidence="2">
    <location>
        <position position="110"/>
    </location>
    <ligand>
        <name>GTP</name>
        <dbReference type="ChEBI" id="CHEBI:37565"/>
    </ligand>
</feature>
<proteinExistence type="inferred from homology"/>